<sequence>MSYIPGQPVTAVVQRVEIHKLRQGENLILGFSIGGGIDQDPSQNPFSEDKTDKVNGWDMTMVTHDQARKRLTKRSEEVVRLLVTRQSLQKAVQQSMLS</sequence>
<evidence type="ECO:0000250" key="1"/>
<evidence type="ECO:0000250" key="2">
    <source>
        <dbReference type="UniProtKB" id="O14907"/>
    </source>
</evidence>
<evidence type="ECO:0000250" key="3">
    <source>
        <dbReference type="UniProtKB" id="Q9DBG9"/>
    </source>
</evidence>
<evidence type="ECO:0000255" key="4"/>
<evidence type="ECO:0000269" key="5">
    <source>
    </source>
</evidence>
<evidence type="ECO:0000312" key="6">
    <source>
        <dbReference type="EMBL" id="AAH97976.1"/>
    </source>
</evidence>
<dbReference type="EMBL" id="BC097976">
    <property type="protein sequence ID" value="AAH97976.1"/>
    <property type="molecule type" value="mRNA"/>
</dbReference>
<dbReference type="RefSeq" id="NP_001020590.1">
    <property type="nucleotide sequence ID" value="NM_001025419.2"/>
</dbReference>
<dbReference type="SMR" id="Q4QQV1"/>
<dbReference type="FunCoup" id="Q4QQV1">
    <property type="interactions" value="1418"/>
</dbReference>
<dbReference type="STRING" id="10116.ENSRNOP00000053298"/>
<dbReference type="PhosphoSitePlus" id="Q4QQV1"/>
<dbReference type="PaxDb" id="10116-ENSRNOP00000053298"/>
<dbReference type="GeneID" id="360564"/>
<dbReference type="KEGG" id="rno:360564"/>
<dbReference type="AGR" id="RGD:1308924"/>
<dbReference type="CTD" id="30851"/>
<dbReference type="RGD" id="1308924">
    <property type="gene designation" value="Tax1bp3"/>
</dbReference>
<dbReference type="VEuPathDB" id="HostDB:ENSRNOG00000019357"/>
<dbReference type="eggNOG" id="KOG3553">
    <property type="taxonomic scope" value="Eukaryota"/>
</dbReference>
<dbReference type="HOGENOM" id="CLU_130477_1_0_1"/>
<dbReference type="InParanoid" id="Q4QQV1"/>
<dbReference type="Reactome" id="R-RNO-5666185">
    <property type="pathway name" value="RHO GTPases Activate Rhotekin and Rhophilins"/>
</dbReference>
<dbReference type="ChiTaRS" id="Tax1bp3">
    <property type="organism name" value="rat"/>
</dbReference>
<dbReference type="PRO" id="PR:Q4QQV1"/>
<dbReference type="Proteomes" id="UP000002494">
    <property type="component" value="Chromosome 10"/>
</dbReference>
<dbReference type="Bgee" id="ENSRNOG00000019357">
    <property type="expression patterns" value="Expressed in jejunum and 19 other cell types or tissues"/>
</dbReference>
<dbReference type="ExpressionAtlas" id="Q4QQV1">
    <property type="expression patterns" value="baseline and differential"/>
</dbReference>
<dbReference type="GO" id="GO:0005737">
    <property type="term" value="C:cytoplasm"/>
    <property type="evidence" value="ECO:0000266"/>
    <property type="project" value="RGD"/>
</dbReference>
<dbReference type="GO" id="GO:0005634">
    <property type="term" value="C:nucleus"/>
    <property type="evidence" value="ECO:0000266"/>
    <property type="project" value="RGD"/>
</dbReference>
<dbReference type="GO" id="GO:0005886">
    <property type="term" value="C:plasma membrane"/>
    <property type="evidence" value="ECO:0007669"/>
    <property type="project" value="UniProtKB-SubCell"/>
</dbReference>
<dbReference type="GO" id="GO:0008013">
    <property type="term" value="F:beta-catenin binding"/>
    <property type="evidence" value="ECO:0000266"/>
    <property type="project" value="RGD"/>
</dbReference>
<dbReference type="GO" id="GO:0008285">
    <property type="term" value="P:negative regulation of cell population proliferation"/>
    <property type="evidence" value="ECO:0000266"/>
    <property type="project" value="RGD"/>
</dbReference>
<dbReference type="GO" id="GO:2000009">
    <property type="term" value="P:negative regulation of protein localization to cell surface"/>
    <property type="evidence" value="ECO:0000250"/>
    <property type="project" value="UniProtKB"/>
</dbReference>
<dbReference type="GO" id="GO:0030178">
    <property type="term" value="P:negative regulation of Wnt signaling pathway"/>
    <property type="evidence" value="ECO:0000250"/>
    <property type="project" value="UniProtKB"/>
</dbReference>
<dbReference type="GO" id="GO:0007266">
    <property type="term" value="P:Rho protein signal transduction"/>
    <property type="evidence" value="ECO:0000250"/>
    <property type="project" value="UniProtKB"/>
</dbReference>
<dbReference type="GO" id="GO:0016055">
    <property type="term" value="P:Wnt signaling pathway"/>
    <property type="evidence" value="ECO:0007669"/>
    <property type="project" value="UniProtKB-KW"/>
</dbReference>
<dbReference type="Gene3D" id="2.30.42.10">
    <property type="match status" value="2"/>
</dbReference>
<dbReference type="InterPro" id="IPR036034">
    <property type="entry name" value="PDZ_sf"/>
</dbReference>
<dbReference type="SUPFAM" id="SSF50156">
    <property type="entry name" value="PDZ domain-like"/>
    <property type="match status" value="1"/>
</dbReference>
<keyword id="KW-0007">Acetylation</keyword>
<keyword id="KW-1003">Cell membrane</keyword>
<keyword id="KW-0963">Cytoplasm</keyword>
<keyword id="KW-0472">Membrane</keyword>
<keyword id="KW-0539">Nucleus</keyword>
<keyword id="KW-1185">Reference proteome</keyword>
<keyword id="KW-0879">Wnt signaling pathway</keyword>
<gene>
    <name evidence="6" type="primary">Tax1bp3</name>
</gene>
<reference key="1">
    <citation type="journal article" date="2004" name="Genome Res.">
        <title>The status, quality, and expansion of the NIH full-length cDNA project: the Mammalian Gene Collection (MGC).</title>
        <authorList>
            <consortium name="The MGC Project Team"/>
        </authorList>
    </citation>
    <scope>NUCLEOTIDE SEQUENCE [LARGE SCALE MRNA]</scope>
    <source>
        <tissue>Placenta</tissue>
    </source>
</reference>
<reference key="2">
    <citation type="journal article" date="2006" name="Mol. Biol. Cell">
        <title>TIP-1 has PDZ scaffold antagonist activity.</title>
        <authorList>
            <person name="Alewine C."/>
            <person name="Olsen O."/>
            <person name="Wade J.B."/>
            <person name="Welling P.A."/>
        </authorList>
    </citation>
    <scope>TISSUE SPECIFICITY</scope>
</reference>
<name>TX1B3_RAT</name>
<protein>
    <recommendedName>
        <fullName>Tax1-binding protein 3</fullName>
    </recommendedName>
</protein>
<organism>
    <name type="scientific">Rattus norvegicus</name>
    <name type="common">Rat</name>
    <dbReference type="NCBI Taxonomy" id="10116"/>
    <lineage>
        <taxon>Eukaryota</taxon>
        <taxon>Metazoa</taxon>
        <taxon>Chordata</taxon>
        <taxon>Craniata</taxon>
        <taxon>Vertebrata</taxon>
        <taxon>Euteleostomi</taxon>
        <taxon>Mammalia</taxon>
        <taxon>Eutheria</taxon>
        <taxon>Euarchontoglires</taxon>
        <taxon>Glires</taxon>
        <taxon>Rodentia</taxon>
        <taxon>Myomorpha</taxon>
        <taxon>Muroidea</taxon>
        <taxon>Muridae</taxon>
        <taxon>Murinae</taxon>
        <taxon>Rattus</taxon>
    </lineage>
</organism>
<accession>Q4QQV1</accession>
<proteinExistence type="evidence at protein level"/>
<comment type="function">
    <text evidence="1">May regulate a number of protein-protein interactions by competing for PDZ domain binding sites. Binds CTNNB1 and may thereby act as an inhibitor of the Wnt signaling pathway. Competes with LIN7A for KCNJ4 binding, and thereby promotes KCNJ4 internalization. May play a role in the Rho signaling pathway (By similarity).</text>
</comment>
<comment type="subunit">
    <text evidence="2 3">Interacts (via its PDZ domain) with GLS2. Interacts (via its PDZ domain) with RTKN (via the C-terminal region); this interaction facilitates Rho-mediated activation of the FOS serum response element (SRE). Interacts (via PDZ domain) with ARHGEF16. Interacts (via PDZ domain) with KCNJ4 (via C-terminus). Competes with LIN7A for KCNJ4 binding (By similarity). Interacts (via its PDZ domain) with CTNNB1; this interaction inhibits the transcriptional activity of CTNNB1 (By similarity). Interacts with ADGRB2.</text>
</comment>
<comment type="subcellular location">
    <subcellularLocation>
        <location evidence="1">Cytoplasm</location>
    </subcellularLocation>
    <subcellularLocation>
        <location evidence="1">Nucleus</location>
    </subcellularLocation>
    <subcellularLocation>
        <location evidence="1">Cell membrane</location>
        <topology evidence="1">Peripheral membrane protein</topology>
        <orientation evidence="1">Cytoplasmic side</orientation>
    </subcellularLocation>
    <text evidence="1">Recruited to the cell membrane by interaction with membrane proteins.</text>
</comment>
<comment type="tissue specificity">
    <text evidence="5">Detected in kidney distal convoluted tubules (at protein level).</text>
</comment>
<feature type="initiator methionine" description="Removed" evidence="2">
    <location>
        <position position="1"/>
    </location>
</feature>
<feature type="chain" id="PRO_0000233945" description="Tax1-binding protein 3">
    <location>
        <begin position="2"/>
        <end position="98"/>
    </location>
</feature>
<feature type="domain" description="PDZ" evidence="4">
    <location>
        <begin position="12"/>
        <end position="87"/>
    </location>
</feature>
<feature type="modified residue" description="N-acetylserine" evidence="2">
    <location>
        <position position="2"/>
    </location>
</feature>